<gene>
    <name type="primary">alkB1</name>
    <name type="ordered locus">PA2574</name>
</gene>
<evidence type="ECO:0000250" key="1">
    <source>
        <dbReference type="UniProtKB" id="P12691"/>
    </source>
</evidence>
<evidence type="ECO:0000255" key="2"/>
<evidence type="ECO:0000269" key="3">
    <source>
    </source>
</evidence>
<evidence type="ECO:0000269" key="4">
    <source>
    </source>
</evidence>
<evidence type="ECO:0000305" key="5"/>
<keyword id="KW-0997">Cell inner membrane</keyword>
<keyword id="KW-1003">Cell membrane</keyword>
<keyword id="KW-0408">Iron</keyword>
<keyword id="KW-0472">Membrane</keyword>
<keyword id="KW-0479">Metal-binding</keyword>
<keyword id="KW-0503">Monooxygenase</keyword>
<keyword id="KW-0560">Oxidoreductase</keyword>
<keyword id="KW-1185">Reference proteome</keyword>
<keyword id="KW-0812">Transmembrane</keyword>
<keyword id="KW-1133">Transmembrane helix</keyword>
<proteinExistence type="evidence at protein level"/>
<protein>
    <recommendedName>
        <fullName>Alkane 1-monooxygenase 1</fullName>
        <ecNumber evidence="4">1.14.15.3</ecNumber>
    </recommendedName>
    <alternativeName>
        <fullName>Alkane hydroxylase</fullName>
        <shortName>AHs</shortName>
    </alternativeName>
    <alternativeName>
        <fullName>Terminal alkane hydroxylase</fullName>
    </alternativeName>
</protein>
<comment type="function">
    <text evidence="4">Catalyzes the hydroxylation of n-alkanes in the presence of a NADH-rubredoxin reductase and rubredoxin. It preferably hydroxylases C16-C24 hydrocarbons.</text>
</comment>
<comment type="catalytic activity">
    <reaction evidence="4">
        <text>octane + 2 reduced [rubredoxin] + O2 + 2 H(+) = 2 oxidized [rubredoxin] + octan-1-ol + H2O</text>
        <dbReference type="Rhea" id="RHEA:19341"/>
        <dbReference type="Rhea" id="RHEA-COMP:10302"/>
        <dbReference type="Rhea" id="RHEA-COMP:10303"/>
        <dbReference type="ChEBI" id="CHEBI:15377"/>
        <dbReference type="ChEBI" id="CHEBI:15378"/>
        <dbReference type="ChEBI" id="CHEBI:15379"/>
        <dbReference type="ChEBI" id="CHEBI:16188"/>
        <dbReference type="ChEBI" id="CHEBI:17590"/>
        <dbReference type="ChEBI" id="CHEBI:29033"/>
        <dbReference type="ChEBI" id="CHEBI:29034"/>
        <dbReference type="EC" id="1.14.15.3"/>
    </reaction>
</comment>
<comment type="cofactor">
    <cofactor evidence="1">
        <name>Fe(3+)</name>
        <dbReference type="ChEBI" id="CHEBI:29034"/>
    </cofactor>
    <text evidence="1">Binds 2 Fe(3+) ions per subunit.</text>
</comment>
<comment type="pathway">
    <text>Hydrocarbon metabolism; alkane degradation.</text>
</comment>
<comment type="subcellular location">
    <subcellularLocation>
        <location evidence="5">Cell inner membrane</location>
        <topology evidence="5">Multi-pass membrane protein</topology>
    </subcellularLocation>
</comment>
<comment type="induction">
    <text evidence="3">Induced by n-alkanes when cells grow slowly during the exponential phase. Expression decreases significantly when cells reached the stationary phase of growth. Repressed by citrate.</text>
</comment>
<comment type="similarity">
    <text evidence="5">Belongs to the fatty acid desaturase type 1 family. AlkB subfamily.</text>
</comment>
<name>ALKB1_PSEAE</name>
<sequence length="382" mass="43339">MFENFSPSTMLAIKKYAYWLWLLLALSMPFNYWMAQDSAHPAFWAFSLVIAVFGIGPLLDMLFGRDPANPDEETQTPQLLGQGYYVLLTLATVPVLIGTLVWAAGVFVAFQEWGWLGRLGWILSMGTVMGAVGIVVAHELIHKDSALEQAAGGILLAAVCYAGFKVEHVRGHHVHVSTPEDASSARFGQSVYQFLPHAYKYNFLNAWRLEAVRLRKKGLPVFGWQNELIWWYLLSLALLVGFGWAFGWLGMVFFLGQAFVAVTLLEIINYVEHYGLHRRKGEDGRYERTNHTHSWNSNFVFTNLVLFHLQRHSDHHAFAKRPYQVLRHYDDSPQMPSGYAGMVVLALIPPLWRAVMDPKVRAYYAGEEFQLTAEQSERPAAS</sequence>
<reference key="1">
    <citation type="submission" date="2008-04" db="EMBL/GenBank/DDBJ databases">
        <title>Identification of genes involved in n-alkane degradation by Pseudomonas aeruginosa XCZ.</title>
        <authorList>
            <person name="Shen B."/>
            <person name="Lu J."/>
            <person name="Zhang L."/>
        </authorList>
    </citation>
    <scope>NUCLEOTIDE SEQUENCE [GENOMIC DNA]</scope>
    <source>
        <strain>XCZ</strain>
    </source>
</reference>
<reference key="2">
    <citation type="journal article" date="2000" name="Nature">
        <title>Complete genome sequence of Pseudomonas aeruginosa PAO1, an opportunistic pathogen.</title>
        <authorList>
            <person name="Stover C.K."/>
            <person name="Pham X.-Q.T."/>
            <person name="Erwin A.L."/>
            <person name="Mizoguchi S.D."/>
            <person name="Warrener P."/>
            <person name="Hickey M.J."/>
            <person name="Brinkman F.S.L."/>
            <person name="Hufnagle W.O."/>
            <person name="Kowalik D.J."/>
            <person name="Lagrou M."/>
            <person name="Garber R.L."/>
            <person name="Goltry L."/>
            <person name="Tolentino E."/>
            <person name="Westbrock-Wadman S."/>
            <person name="Yuan Y."/>
            <person name="Brody L.L."/>
            <person name="Coulter S.N."/>
            <person name="Folger K.R."/>
            <person name="Kas A."/>
            <person name="Larbig K."/>
            <person name="Lim R.M."/>
            <person name="Smith K.A."/>
            <person name="Spencer D.H."/>
            <person name="Wong G.K.-S."/>
            <person name="Wu Z."/>
            <person name="Paulsen I.T."/>
            <person name="Reizer J."/>
            <person name="Saier M.H. Jr."/>
            <person name="Hancock R.E.W."/>
            <person name="Lory S."/>
            <person name="Olson M.V."/>
        </authorList>
    </citation>
    <scope>NUCLEOTIDE SEQUENCE [LARGE SCALE GENOMIC DNA]</scope>
    <source>
        <strain>ATCC 15692 / DSM 22644 / CIP 104116 / JCM 14847 / LMG 12228 / 1C / PRS 101 / PAO1</strain>
    </source>
</reference>
<reference key="3">
    <citation type="journal article" date="2003" name="Antonie Van Leeuwenhoek">
        <title>Functional characterization of genes involved in alkane oxidation by Pseudomonas aeruginosa.</title>
        <authorList>
            <person name="Smits T.H."/>
            <person name="Witholt B."/>
            <person name="van Beilen J.B."/>
        </authorList>
    </citation>
    <scope>FUNCTION IN ALKANE DEGRADATION</scope>
</reference>
<reference key="4">
    <citation type="journal article" date="2003" name="J. Bacteriol.">
        <title>Differential expression of the components of the two alkane hydroxylases from Pseudomonas aeruginosa.</title>
        <authorList>
            <person name="Marin M.M."/>
            <person name="Yuste L."/>
            <person name="Rojo F."/>
        </authorList>
    </citation>
    <scope>INDUCTION</scope>
    <scope>SUBSTRATE SPECIFICITY</scope>
    <scope>CATALYTIC ACTIVITY</scope>
    <source>
        <strain>ATCC 15692 / DSM 22644 / CIP 104116 / JCM 14847 / LMG 12228 / 1C / PRS 101 / PAO1</strain>
    </source>
</reference>
<feature type="chain" id="PRO_0000392218" description="Alkane 1-monooxygenase 1">
    <location>
        <begin position="1"/>
        <end position="382"/>
    </location>
</feature>
<feature type="transmembrane region" description="Helical" evidence="2">
    <location>
        <begin position="10"/>
        <end position="30"/>
    </location>
</feature>
<feature type="transmembrane region" description="Helical" evidence="2">
    <location>
        <begin position="43"/>
        <end position="63"/>
    </location>
</feature>
<feature type="transmembrane region" description="Helical" evidence="2">
    <location>
        <begin position="90"/>
        <end position="110"/>
    </location>
</feature>
<feature type="transmembrane region" description="Helical" evidence="2">
    <location>
        <begin position="121"/>
        <end position="141"/>
    </location>
</feature>
<feature type="transmembrane region" description="Helical" evidence="2">
    <location>
        <begin position="146"/>
        <end position="166"/>
    </location>
</feature>
<feature type="transmembrane region" description="Helical" evidence="2">
    <location>
        <begin position="236"/>
        <end position="256"/>
    </location>
</feature>
<feature type="binding site" evidence="1">
    <location>
        <position position="138"/>
    </location>
    <ligand>
        <name>Fe cation</name>
        <dbReference type="ChEBI" id="CHEBI:24875"/>
        <label>1</label>
    </ligand>
</feature>
<feature type="binding site" evidence="1">
    <location>
        <position position="142"/>
    </location>
    <ligand>
        <name>Fe cation</name>
        <dbReference type="ChEBI" id="CHEBI:24875"/>
        <label>1</label>
    </ligand>
</feature>
<feature type="binding site" evidence="1">
    <location>
        <position position="168"/>
    </location>
    <ligand>
        <name>Fe cation</name>
        <dbReference type="ChEBI" id="CHEBI:24875"/>
        <label>1</label>
    </ligand>
</feature>
<feature type="binding site" evidence="1">
    <location>
        <position position="172"/>
    </location>
    <ligand>
        <name>Fe cation</name>
        <dbReference type="ChEBI" id="CHEBI:24875"/>
        <label>1</label>
    </ligand>
</feature>
<feature type="binding site" evidence="1">
    <location>
        <position position="173"/>
    </location>
    <ligand>
        <name>Fe cation</name>
        <dbReference type="ChEBI" id="CHEBI:24875"/>
        <label>2</label>
    </ligand>
</feature>
<feature type="binding site" evidence="1">
    <location>
        <position position="312"/>
    </location>
    <ligand>
        <name>Fe cation</name>
        <dbReference type="ChEBI" id="CHEBI:24875"/>
        <label>2</label>
    </ligand>
</feature>
<feature type="binding site" evidence="1">
    <location>
        <position position="315"/>
    </location>
    <ligand>
        <name>Fe cation</name>
        <dbReference type="ChEBI" id="CHEBI:24875"/>
        <label>2</label>
    </ligand>
</feature>
<feature type="binding site" evidence="1">
    <location>
        <position position="316"/>
    </location>
    <ligand>
        <name>Fe cation</name>
        <dbReference type="ChEBI" id="CHEBI:24875"/>
        <label>2</label>
    </ligand>
</feature>
<dbReference type="EC" id="1.14.15.3" evidence="4"/>
<dbReference type="EMBL" id="EU675620">
    <property type="protein sequence ID" value="ACD75516.1"/>
    <property type="molecule type" value="Genomic_DNA"/>
</dbReference>
<dbReference type="EMBL" id="AE004091">
    <property type="protein sequence ID" value="AAG05962.1"/>
    <property type="molecule type" value="Genomic_DNA"/>
</dbReference>
<dbReference type="PIR" id="A83325">
    <property type="entry name" value="A83325"/>
</dbReference>
<dbReference type="RefSeq" id="NP_251264.1">
    <property type="nucleotide sequence ID" value="NC_002516.2"/>
</dbReference>
<dbReference type="RefSeq" id="WP_003102475.1">
    <property type="nucleotide sequence ID" value="NZ_QZGE01000008.1"/>
</dbReference>
<dbReference type="SMR" id="Q9I0R2"/>
<dbReference type="STRING" id="208964.PA2574"/>
<dbReference type="PaxDb" id="208964-PA2574"/>
<dbReference type="GeneID" id="878705"/>
<dbReference type="KEGG" id="pae:PA2574"/>
<dbReference type="PATRIC" id="fig|208964.12.peg.2694"/>
<dbReference type="PseudoCAP" id="PA2574"/>
<dbReference type="HOGENOM" id="CLU_044462_1_0_6"/>
<dbReference type="InParanoid" id="Q9I0R2"/>
<dbReference type="OrthoDB" id="4759734at2"/>
<dbReference type="PhylomeDB" id="Q9I0R2"/>
<dbReference type="BioCyc" id="PAER208964:G1FZ6-2611-MONOMER"/>
<dbReference type="UniPathway" id="UPA00191"/>
<dbReference type="Proteomes" id="UP000002438">
    <property type="component" value="Chromosome"/>
</dbReference>
<dbReference type="GO" id="GO:0005886">
    <property type="term" value="C:plasma membrane"/>
    <property type="evidence" value="ECO:0007669"/>
    <property type="project" value="UniProtKB-SubCell"/>
</dbReference>
<dbReference type="GO" id="GO:0018685">
    <property type="term" value="F:alkane 1-monooxygenase activity"/>
    <property type="evidence" value="ECO:0000250"/>
    <property type="project" value="UniProtKB"/>
</dbReference>
<dbReference type="GO" id="GO:0046872">
    <property type="term" value="F:metal ion binding"/>
    <property type="evidence" value="ECO:0007669"/>
    <property type="project" value="UniProtKB-KW"/>
</dbReference>
<dbReference type="GO" id="GO:0043448">
    <property type="term" value="P:alkane catabolic process"/>
    <property type="evidence" value="ECO:0000250"/>
    <property type="project" value="UniProtKB"/>
</dbReference>
<dbReference type="GO" id="GO:0006629">
    <property type="term" value="P:lipid metabolic process"/>
    <property type="evidence" value="ECO:0007669"/>
    <property type="project" value="InterPro"/>
</dbReference>
<dbReference type="CDD" id="cd03512">
    <property type="entry name" value="Alkane-hydroxylase"/>
    <property type="match status" value="1"/>
</dbReference>
<dbReference type="InterPro" id="IPR033885">
    <property type="entry name" value="AlkB/XylM"/>
</dbReference>
<dbReference type="InterPro" id="IPR005804">
    <property type="entry name" value="FA_desaturase_dom"/>
</dbReference>
<dbReference type="PANTHER" id="PTHR38674">
    <property type="entry name" value="ALKANE 1-MONOOXYGENASE 1"/>
    <property type="match status" value="1"/>
</dbReference>
<dbReference type="PANTHER" id="PTHR38674:SF1">
    <property type="entry name" value="ALKANE 1-MONOOXYGENASE 1"/>
    <property type="match status" value="1"/>
</dbReference>
<dbReference type="Pfam" id="PF00487">
    <property type="entry name" value="FA_desaturase"/>
    <property type="match status" value="1"/>
</dbReference>
<organism>
    <name type="scientific">Pseudomonas aeruginosa (strain ATCC 15692 / DSM 22644 / CIP 104116 / JCM 14847 / LMG 12228 / 1C / PRS 101 / PAO1)</name>
    <dbReference type="NCBI Taxonomy" id="208964"/>
    <lineage>
        <taxon>Bacteria</taxon>
        <taxon>Pseudomonadati</taxon>
        <taxon>Pseudomonadota</taxon>
        <taxon>Gammaproteobacteria</taxon>
        <taxon>Pseudomonadales</taxon>
        <taxon>Pseudomonadaceae</taxon>
        <taxon>Pseudomonas</taxon>
    </lineage>
</organism>
<accession>Q9I0R2</accession>